<proteinExistence type="predicted"/>
<organism>
    <name type="scientific">Haemophilus influenzae (strain ATCC 51907 / DSM 11121 / KW20 / Rd)</name>
    <dbReference type="NCBI Taxonomy" id="71421"/>
    <lineage>
        <taxon>Bacteria</taxon>
        <taxon>Pseudomonadati</taxon>
        <taxon>Pseudomonadota</taxon>
        <taxon>Gammaproteobacteria</taxon>
        <taxon>Pasteurellales</taxon>
        <taxon>Pasteurellaceae</taxon>
        <taxon>Haemophilus</taxon>
    </lineage>
</organism>
<dbReference type="EMBL" id="L42023">
    <property type="protein sequence ID" value="AAC22635.1"/>
    <property type="molecule type" value="Genomic_DNA"/>
</dbReference>
<dbReference type="PIR" id="B64163">
    <property type="entry name" value="B64163"/>
</dbReference>
<dbReference type="SMR" id="Q57147"/>
<dbReference type="STRING" id="71421.HI_0976"/>
<dbReference type="EnsemblBacteria" id="AAC22635">
    <property type="protein sequence ID" value="AAC22635"/>
    <property type="gene ID" value="HI_0976"/>
</dbReference>
<dbReference type="KEGG" id="hin:HI_0976"/>
<dbReference type="eggNOG" id="COG0697">
    <property type="taxonomic scope" value="Bacteria"/>
</dbReference>
<dbReference type="HOGENOM" id="CLU_1956518_0_0_6"/>
<dbReference type="Proteomes" id="UP000000579">
    <property type="component" value="Chromosome"/>
</dbReference>
<dbReference type="GO" id="GO:0005886">
    <property type="term" value="C:plasma membrane"/>
    <property type="evidence" value="ECO:0007669"/>
    <property type="project" value="UniProtKB-SubCell"/>
</dbReference>
<dbReference type="InterPro" id="IPR050638">
    <property type="entry name" value="AA-Vitamin_Transporters"/>
</dbReference>
<dbReference type="InterPro" id="IPR000620">
    <property type="entry name" value="EamA_dom"/>
</dbReference>
<dbReference type="PANTHER" id="PTHR32322">
    <property type="entry name" value="INNER MEMBRANE TRANSPORTER"/>
    <property type="match status" value="1"/>
</dbReference>
<dbReference type="PANTHER" id="PTHR32322:SF18">
    <property type="entry name" value="S-ADENOSYLMETHIONINE_S-ADENOSYLHOMOCYSTEINE TRANSPORTER"/>
    <property type="match status" value="1"/>
</dbReference>
<dbReference type="Pfam" id="PF00892">
    <property type="entry name" value="EamA"/>
    <property type="match status" value="1"/>
</dbReference>
<dbReference type="SUPFAM" id="SSF103481">
    <property type="entry name" value="Multidrug resistance efflux transporter EmrE"/>
    <property type="match status" value="1"/>
</dbReference>
<comment type="subcellular location">
    <subcellularLocation>
        <location evidence="2">Cell membrane</location>
        <topology evidence="2">Multi-pass membrane protein</topology>
    </subcellularLocation>
</comment>
<name>Y976_HAEIN</name>
<keyword id="KW-1003">Cell membrane</keyword>
<keyword id="KW-0472">Membrane</keyword>
<keyword id="KW-1185">Reference proteome</keyword>
<keyword id="KW-0812">Transmembrane</keyword>
<keyword id="KW-1133">Transmembrane helix</keyword>
<protein>
    <recommendedName>
        <fullName>Uncharacterized protein HI_0976</fullName>
    </recommendedName>
</protein>
<gene>
    <name type="ordered locus">HI_0976</name>
</gene>
<evidence type="ECO:0000255" key="1"/>
<evidence type="ECO:0000305" key="2"/>
<accession>Q57147</accession>
<accession>O05039</accession>
<reference key="1">
    <citation type="journal article" date="1995" name="Science">
        <title>Whole-genome random sequencing and assembly of Haemophilus influenzae Rd.</title>
        <authorList>
            <person name="Fleischmann R.D."/>
            <person name="Adams M.D."/>
            <person name="White O."/>
            <person name="Clayton R.A."/>
            <person name="Kirkness E.F."/>
            <person name="Kerlavage A.R."/>
            <person name="Bult C.J."/>
            <person name="Tomb J.-F."/>
            <person name="Dougherty B.A."/>
            <person name="Merrick J.M."/>
            <person name="McKenney K."/>
            <person name="Sutton G.G."/>
            <person name="FitzHugh W."/>
            <person name="Fields C.A."/>
            <person name="Gocayne J.D."/>
            <person name="Scott J.D."/>
            <person name="Shirley R."/>
            <person name="Liu L.-I."/>
            <person name="Glodek A."/>
            <person name="Kelley J.M."/>
            <person name="Weidman J.F."/>
            <person name="Phillips C.A."/>
            <person name="Spriggs T."/>
            <person name="Hedblom E."/>
            <person name="Cotton M.D."/>
            <person name="Utterback T.R."/>
            <person name="Hanna M.C."/>
            <person name="Nguyen D.T."/>
            <person name="Saudek D.M."/>
            <person name="Brandon R.C."/>
            <person name="Fine L.D."/>
            <person name="Fritchman J.L."/>
            <person name="Fuhrmann J.L."/>
            <person name="Geoghagen N.S.M."/>
            <person name="Gnehm C.L."/>
            <person name="McDonald L.A."/>
            <person name="Small K.V."/>
            <person name="Fraser C.M."/>
            <person name="Smith H.O."/>
            <person name="Venter J.C."/>
        </authorList>
    </citation>
    <scope>NUCLEOTIDE SEQUENCE [LARGE SCALE GENOMIC DNA]</scope>
    <source>
        <strain>ATCC 51907 / DSM 11121 / KW20 / Rd</strain>
    </source>
</reference>
<sequence>MLYQILALLIWSSSLIVGKLTYSMMDPVLVVQVRLIIAMIIVMPLFLRRWKKIDKPMRKQLWWLAFFNYTAVFLLQFIGLKYTSASSAVTMIGLEPLLVVFVGHFFFKTKQNGFTGYSVQWHLLAWQF</sequence>
<feature type="chain" id="PRO_0000077986" description="Uncharacterized protein HI_0976">
    <location>
        <begin position="1"/>
        <end position="128"/>
    </location>
</feature>
<feature type="transmembrane region" description="Helical" evidence="1">
    <location>
        <begin position="5"/>
        <end position="25"/>
    </location>
</feature>
<feature type="transmembrane region" description="Helical" evidence="1">
    <location>
        <begin position="27"/>
        <end position="47"/>
    </location>
</feature>
<feature type="transmembrane region" description="Helical" evidence="1">
    <location>
        <begin position="60"/>
        <end position="80"/>
    </location>
</feature>
<feature type="transmembrane region" description="Helical" evidence="1">
    <location>
        <begin position="87"/>
        <end position="107"/>
    </location>
</feature>
<feature type="domain" description="EamA">
    <location>
        <begin position="9"/>
        <end position="110"/>
    </location>
</feature>